<dbReference type="EMBL" id="CP000252">
    <property type="protein sequence ID" value="ABC76626.1"/>
    <property type="status" value="ALT_INIT"/>
    <property type="molecule type" value="Genomic_DNA"/>
</dbReference>
<dbReference type="SMR" id="Q2LRB9"/>
<dbReference type="STRING" id="56780.SYN_02965"/>
<dbReference type="KEGG" id="sat:SYN_02965"/>
<dbReference type="eggNOG" id="COG0636">
    <property type="taxonomic scope" value="Bacteria"/>
</dbReference>
<dbReference type="HOGENOM" id="CLU_148047_0_0_7"/>
<dbReference type="InParanoid" id="Q2LRB9"/>
<dbReference type="OrthoDB" id="5296711at2"/>
<dbReference type="Proteomes" id="UP000001933">
    <property type="component" value="Chromosome"/>
</dbReference>
<dbReference type="GO" id="GO:0005886">
    <property type="term" value="C:plasma membrane"/>
    <property type="evidence" value="ECO:0007669"/>
    <property type="project" value="UniProtKB-SubCell"/>
</dbReference>
<dbReference type="GO" id="GO:0045259">
    <property type="term" value="C:proton-transporting ATP synthase complex"/>
    <property type="evidence" value="ECO:0007669"/>
    <property type="project" value="UniProtKB-KW"/>
</dbReference>
<dbReference type="GO" id="GO:0033177">
    <property type="term" value="C:proton-transporting two-sector ATPase complex, proton-transporting domain"/>
    <property type="evidence" value="ECO:0007669"/>
    <property type="project" value="InterPro"/>
</dbReference>
<dbReference type="GO" id="GO:0008289">
    <property type="term" value="F:lipid binding"/>
    <property type="evidence" value="ECO:0007669"/>
    <property type="project" value="UniProtKB-KW"/>
</dbReference>
<dbReference type="GO" id="GO:0046933">
    <property type="term" value="F:proton-transporting ATP synthase activity, rotational mechanism"/>
    <property type="evidence" value="ECO:0007669"/>
    <property type="project" value="UniProtKB-UniRule"/>
</dbReference>
<dbReference type="CDD" id="cd18121">
    <property type="entry name" value="ATP-synt_Fo_c"/>
    <property type="match status" value="1"/>
</dbReference>
<dbReference type="FunFam" id="1.20.20.10:FF:000002">
    <property type="entry name" value="ATP synthase subunit c"/>
    <property type="match status" value="1"/>
</dbReference>
<dbReference type="Gene3D" id="1.20.20.10">
    <property type="entry name" value="F1F0 ATP synthase subunit C"/>
    <property type="match status" value="1"/>
</dbReference>
<dbReference type="HAMAP" id="MF_01396">
    <property type="entry name" value="ATP_synth_c_bact"/>
    <property type="match status" value="1"/>
</dbReference>
<dbReference type="InterPro" id="IPR005953">
    <property type="entry name" value="ATP_synth_csu_bac/chlpt"/>
</dbReference>
<dbReference type="InterPro" id="IPR000454">
    <property type="entry name" value="ATP_synth_F0_csu"/>
</dbReference>
<dbReference type="InterPro" id="IPR020537">
    <property type="entry name" value="ATP_synth_F0_csu_DDCD_BS"/>
</dbReference>
<dbReference type="InterPro" id="IPR038662">
    <property type="entry name" value="ATP_synth_F0_csu_sf"/>
</dbReference>
<dbReference type="InterPro" id="IPR002379">
    <property type="entry name" value="ATPase_proteolipid_c-like_dom"/>
</dbReference>
<dbReference type="InterPro" id="IPR035921">
    <property type="entry name" value="F/V-ATP_Csub_sf"/>
</dbReference>
<dbReference type="NCBIfam" id="TIGR01260">
    <property type="entry name" value="ATP_synt_c"/>
    <property type="match status" value="1"/>
</dbReference>
<dbReference type="Pfam" id="PF00137">
    <property type="entry name" value="ATP-synt_C"/>
    <property type="match status" value="1"/>
</dbReference>
<dbReference type="PRINTS" id="PR00124">
    <property type="entry name" value="ATPASEC"/>
</dbReference>
<dbReference type="SUPFAM" id="SSF81333">
    <property type="entry name" value="F1F0 ATP synthase subunit C"/>
    <property type="match status" value="1"/>
</dbReference>
<dbReference type="PROSITE" id="PS00605">
    <property type="entry name" value="ATPASE_C"/>
    <property type="match status" value="1"/>
</dbReference>
<evidence type="ECO:0000255" key="1">
    <source>
        <dbReference type="HAMAP-Rule" id="MF_01396"/>
    </source>
</evidence>
<evidence type="ECO:0000305" key="2"/>
<keyword id="KW-0066">ATP synthesis</keyword>
<keyword id="KW-0997">Cell inner membrane</keyword>
<keyword id="KW-1003">Cell membrane</keyword>
<keyword id="KW-0138">CF(0)</keyword>
<keyword id="KW-0375">Hydrogen ion transport</keyword>
<keyword id="KW-0406">Ion transport</keyword>
<keyword id="KW-0446">Lipid-binding</keyword>
<keyword id="KW-0472">Membrane</keyword>
<keyword id="KW-1185">Reference proteome</keyword>
<keyword id="KW-0812">Transmembrane</keyword>
<keyword id="KW-1133">Transmembrane helix</keyword>
<keyword id="KW-0813">Transport</keyword>
<comment type="function">
    <text evidence="1">F(1)F(0) ATP synthase produces ATP from ADP in the presence of a proton or sodium gradient. F-type ATPases consist of two structural domains, F(1) containing the extramembraneous catalytic core and F(0) containing the membrane proton channel, linked together by a central stalk and a peripheral stalk. During catalysis, ATP synthesis in the catalytic domain of F(1) is coupled via a rotary mechanism of the central stalk subunits to proton translocation.</text>
</comment>
<comment type="function">
    <text evidence="1">Key component of the F(0) channel; it plays a direct role in translocation across the membrane. A homomeric c-ring of between 10-14 subunits forms the central stalk rotor element with the F(1) delta and epsilon subunits.</text>
</comment>
<comment type="subunit">
    <text evidence="1">F-type ATPases have 2 components, F(1) - the catalytic core - and F(0) - the membrane proton channel. F(1) has five subunits: alpha(3), beta(3), gamma(1), delta(1), epsilon(1). F(0) has three main subunits: a(1), b(2) and c(10-14). The alpha and beta chains form an alternating ring which encloses part of the gamma chain. F(1) is attached to F(0) by a central stalk formed by the gamma and epsilon chains, while a peripheral stalk is formed by the delta and b chains.</text>
</comment>
<comment type="subcellular location">
    <subcellularLocation>
        <location evidence="1">Cell inner membrane</location>
        <topology evidence="1">Multi-pass membrane protein</topology>
    </subcellularLocation>
</comment>
<comment type="similarity">
    <text evidence="1">Belongs to the ATPase C chain family.</text>
</comment>
<comment type="sequence caution" evidence="2">
    <conflict type="erroneous initiation">
        <sequence resource="EMBL-CDS" id="ABC76626"/>
    </conflict>
</comment>
<accession>Q2LRB9</accession>
<name>ATPL_SYNAS</name>
<proteinExistence type="inferred from homology"/>
<gene>
    <name evidence="1" type="primary">atpE</name>
    <name type="ordered locus">SYNAS_07470</name>
    <name type="ORF">SYN_02965</name>
</gene>
<reference key="1">
    <citation type="journal article" date="2007" name="Proc. Natl. Acad. Sci. U.S.A.">
        <title>The genome of Syntrophus aciditrophicus: life at the thermodynamic limit of microbial growth.</title>
        <authorList>
            <person name="McInerney M.J."/>
            <person name="Rohlin L."/>
            <person name="Mouttaki H."/>
            <person name="Kim U."/>
            <person name="Krupp R.S."/>
            <person name="Rios-Hernandez L."/>
            <person name="Sieber J."/>
            <person name="Struchtemeyer C.G."/>
            <person name="Bhattacharyya A."/>
            <person name="Campbell J.W."/>
            <person name="Gunsalus R.P."/>
        </authorList>
    </citation>
    <scope>NUCLEOTIDE SEQUENCE [LARGE SCALE GENOMIC DNA]</scope>
    <source>
        <strain>SB</strain>
    </source>
</reference>
<sequence length="118" mass="11534">MVTCLTTFAVLLLTAAVASAAEAAAPGGESYVKAIFAVGAMIGAGIAIGVGAVGAGLGIGTAASGACQAVGRNPGVQGKIMMTMLVGMAMAESIAIYALVVSLVLIFANPYTKFFFVG</sequence>
<protein>
    <recommendedName>
        <fullName evidence="1">ATP synthase subunit c</fullName>
    </recommendedName>
    <alternativeName>
        <fullName evidence="1">ATP synthase F(0) sector subunit c</fullName>
    </alternativeName>
    <alternativeName>
        <fullName evidence="1">F-type ATPase subunit c</fullName>
        <shortName evidence="1">F-ATPase subunit c</shortName>
    </alternativeName>
    <alternativeName>
        <fullName evidence="1">Lipid-binding protein</fullName>
    </alternativeName>
</protein>
<organism>
    <name type="scientific">Syntrophus aciditrophicus (strain SB)</name>
    <dbReference type="NCBI Taxonomy" id="56780"/>
    <lineage>
        <taxon>Bacteria</taxon>
        <taxon>Pseudomonadati</taxon>
        <taxon>Thermodesulfobacteriota</taxon>
        <taxon>Syntrophia</taxon>
        <taxon>Syntrophales</taxon>
        <taxon>Syntrophaceae</taxon>
        <taxon>Syntrophus</taxon>
    </lineage>
</organism>
<feature type="chain" id="PRO_0000365932" description="ATP synthase subunit c">
    <location>
        <begin position="1"/>
        <end position="118"/>
    </location>
</feature>
<feature type="transmembrane region" description="Helical" evidence="1">
    <location>
        <begin position="34"/>
        <end position="54"/>
    </location>
</feature>
<feature type="transmembrane region" description="Helical" evidence="1">
    <location>
        <begin position="88"/>
        <end position="108"/>
    </location>
</feature>
<feature type="site" description="Reversibly protonated during proton transport" evidence="1">
    <location>
        <position position="92"/>
    </location>
</feature>